<dbReference type="EMBL" id="Y08501">
    <property type="protein sequence ID" value="CAA69828.1"/>
    <property type="molecule type" value="Genomic_DNA"/>
</dbReference>
<dbReference type="EMBL" id="BK010421">
    <property type="status" value="NOT_ANNOTATED_CDS"/>
    <property type="molecule type" value="Genomic_DNA"/>
</dbReference>
<dbReference type="EMBL" id="AC007143">
    <property type="status" value="NOT_ANNOTATED_CDS"/>
    <property type="molecule type" value="Genomic_DNA"/>
</dbReference>
<dbReference type="EMBL" id="AC007730">
    <property type="status" value="NOT_ANNOTATED_CDS"/>
    <property type="molecule type" value="Genomic_DNA"/>
</dbReference>
<dbReference type="RefSeq" id="NP_085542.1">
    <property type="nucleotide sequence ID" value="NC_001284.2"/>
</dbReference>
<dbReference type="SMR" id="P92523"/>
<dbReference type="STRING" id="3702.P92523"/>
<dbReference type="PaxDb" id="3702-ATMG00860.1"/>
<dbReference type="ProteomicsDB" id="238831"/>
<dbReference type="EnsemblPlants" id="ATMG00860.1">
    <property type="protein sequence ID" value="ATMG00860.1"/>
    <property type="gene ID" value="ATMG00860"/>
</dbReference>
<dbReference type="Gramene" id="ATMG00860.1">
    <property type="protein sequence ID" value="ATMG00860.1"/>
    <property type="gene ID" value="ATMG00860"/>
</dbReference>
<dbReference type="Araport" id="ATMG00860"/>
<dbReference type="TAIR" id="ATMG00860">
    <property type="gene designation" value="ORF158"/>
</dbReference>
<dbReference type="eggNOG" id="KOG0017">
    <property type="taxonomic scope" value="Eukaryota"/>
</dbReference>
<dbReference type="HOGENOM" id="CLU_1671742_0_0_1"/>
<dbReference type="InParanoid" id="P92523"/>
<dbReference type="OMA" id="ITREQAC"/>
<dbReference type="PRO" id="PR:P92523"/>
<dbReference type="Proteomes" id="UP000006548">
    <property type="component" value="Mitochondrion MT"/>
</dbReference>
<dbReference type="ExpressionAtlas" id="P92523">
    <property type="expression patterns" value="baseline and differential"/>
</dbReference>
<dbReference type="GO" id="GO:0005739">
    <property type="term" value="C:mitochondrion"/>
    <property type="evidence" value="ECO:0007669"/>
    <property type="project" value="UniProtKB-SubCell"/>
</dbReference>
<dbReference type="FunFam" id="3.30.70.270:FF:000020">
    <property type="entry name" value="Transposon Tf2-6 polyprotein-like Protein"/>
    <property type="match status" value="1"/>
</dbReference>
<dbReference type="Gene3D" id="3.30.70.270">
    <property type="match status" value="2"/>
</dbReference>
<dbReference type="InterPro" id="IPR043502">
    <property type="entry name" value="DNA/RNA_pol_sf"/>
</dbReference>
<dbReference type="InterPro" id="IPR043128">
    <property type="entry name" value="Rev_trsase/Diguanyl_cyclase"/>
</dbReference>
<dbReference type="InterPro" id="IPR051320">
    <property type="entry name" value="Viral_Replic_Matur_Polypro"/>
</dbReference>
<dbReference type="PANTHER" id="PTHR33064">
    <property type="entry name" value="POL PROTEIN"/>
    <property type="match status" value="1"/>
</dbReference>
<dbReference type="PANTHER" id="PTHR33064:SF37">
    <property type="entry name" value="RIBONUCLEASE H"/>
    <property type="match status" value="1"/>
</dbReference>
<dbReference type="SUPFAM" id="SSF56672">
    <property type="entry name" value="DNA/RNA polymerases"/>
    <property type="match status" value="1"/>
</dbReference>
<geneLocation type="mitochondrion"/>
<comment type="subcellular location">
    <subcellularLocation>
        <location evidence="1">Mitochondrion</location>
    </subcellularLocation>
</comment>
<comment type="miscellaneous">
    <text>A stretch of 270 kb of the mitochondrial genome is duplicated within the centromere of chromosome 2 resulting in the duplication of the gene. The expression of the duplicated gene (At2g07682) is not demonstrated.</text>
</comment>
<protein>
    <recommendedName>
        <fullName>Uncharacterized mitochondrial protein AtMg00860</fullName>
    </recommendedName>
    <alternativeName>
        <fullName>ORF158</fullName>
    </alternativeName>
</protein>
<reference key="1">
    <citation type="journal article" date="1997" name="Nat. Genet.">
        <title>The mitochondrial genome of Arabidopsis thaliana contains 57 genes in 366,924 nucleotides.</title>
        <authorList>
            <person name="Unseld M."/>
            <person name="Marienfeld J.R."/>
            <person name="Brandt P."/>
            <person name="Brennicke A."/>
        </authorList>
    </citation>
    <scope>NUCLEOTIDE SEQUENCE [LARGE SCALE GENOMIC DNA]</scope>
    <source>
        <strain>cv. C24</strain>
    </source>
</reference>
<reference key="2">
    <citation type="journal article" date="2018" name="Plant Cell">
        <title>Correction of persistent errors in Arabidopsis reference mitochondrial genomes.</title>
        <authorList>
            <person name="Sloan D.B."/>
            <person name="Wu Z."/>
            <person name="Sharbrough J."/>
        </authorList>
    </citation>
    <scope>NUCLEOTIDE SEQUENCE [LARGE SCALE GENOMIC DNA]</scope>
    <source>
        <strain>cv. Columbia</strain>
    </source>
</reference>
<reference key="3">
    <citation type="journal article" date="1999" name="Nature">
        <title>Sequence and analysis of chromosome 2 of the plant Arabidopsis thaliana.</title>
        <authorList>
            <person name="Lin X."/>
            <person name="Kaul S."/>
            <person name="Rounsley S.D."/>
            <person name="Shea T.P."/>
            <person name="Benito M.-I."/>
            <person name="Town C.D."/>
            <person name="Fujii C.Y."/>
            <person name="Mason T.M."/>
            <person name="Bowman C.L."/>
            <person name="Barnstead M.E."/>
            <person name="Feldblyum T.V."/>
            <person name="Buell C.R."/>
            <person name="Ketchum K.A."/>
            <person name="Lee J.J."/>
            <person name="Ronning C.M."/>
            <person name="Koo H.L."/>
            <person name="Moffat K.S."/>
            <person name="Cronin L.A."/>
            <person name="Shen M."/>
            <person name="Pai G."/>
            <person name="Van Aken S."/>
            <person name="Umayam L."/>
            <person name="Tallon L.J."/>
            <person name="Gill J.E."/>
            <person name="Adams M.D."/>
            <person name="Carrera A.J."/>
            <person name="Creasy T.H."/>
            <person name="Goodman H.M."/>
            <person name="Somerville C.R."/>
            <person name="Copenhaver G.P."/>
            <person name="Preuss D."/>
            <person name="Nierman W.C."/>
            <person name="White O."/>
            <person name="Eisen J.A."/>
            <person name="Salzberg S.L."/>
            <person name="Fraser C.M."/>
            <person name="Venter J.C."/>
        </authorList>
    </citation>
    <scope>NUCLEOTIDE SEQUENCE [LARGE SCALE GENOMIC DNA] (AT2G07682)</scope>
    <source>
        <strain>cv. Columbia</strain>
    </source>
</reference>
<feature type="chain" id="PRO_0000196796" description="Uncharacterized mitochondrial protein AtMg00860">
    <location>
        <begin position="1"/>
        <end position="158"/>
    </location>
</feature>
<gene>
    <name type="ordered locus">AtMg00860</name>
</gene>
<proteinExistence type="predicted"/>
<name>M860_ARATH</name>
<sequence length="158" mass="17979">MNHLGMVLQIWEQHQFYANRKKCAFGQPQIAYLGHRHIISGEGVSADPAKLEAMVGWPEPKNTTELRGFLGLTGYYRRFVKNYGKIVRPLTELLKKNSLKWTEMAALAFKALKGAVTTLPVLALPDLKLPFVTRVGKWNWSCFITREQACCVSQPRVF</sequence>
<keyword id="KW-0496">Mitochondrion</keyword>
<keyword id="KW-1185">Reference proteome</keyword>
<organism>
    <name type="scientific">Arabidopsis thaliana</name>
    <name type="common">Mouse-ear cress</name>
    <dbReference type="NCBI Taxonomy" id="3702"/>
    <lineage>
        <taxon>Eukaryota</taxon>
        <taxon>Viridiplantae</taxon>
        <taxon>Streptophyta</taxon>
        <taxon>Embryophyta</taxon>
        <taxon>Tracheophyta</taxon>
        <taxon>Spermatophyta</taxon>
        <taxon>Magnoliopsida</taxon>
        <taxon>eudicotyledons</taxon>
        <taxon>Gunneridae</taxon>
        <taxon>Pentapetalae</taxon>
        <taxon>rosids</taxon>
        <taxon>malvids</taxon>
        <taxon>Brassicales</taxon>
        <taxon>Brassicaceae</taxon>
        <taxon>Camelineae</taxon>
        <taxon>Arabidopsis</taxon>
    </lineage>
</organism>
<evidence type="ECO:0000305" key="1"/>
<accession>P92523</accession>
<accession>Q1ZXY9</accession>